<protein>
    <recommendedName>
        <fullName evidence="1">Large ribosomal subunit protein bL35</fullName>
    </recommendedName>
    <alternativeName>
        <fullName evidence="3">50S ribosomal protein L35</fullName>
    </alternativeName>
</protein>
<dbReference type="EMBL" id="CP000034">
    <property type="protein sequence ID" value="ABB61923.1"/>
    <property type="molecule type" value="Genomic_DNA"/>
</dbReference>
<dbReference type="RefSeq" id="WP_001124225.1">
    <property type="nucleotide sequence ID" value="NC_007606.1"/>
</dbReference>
<dbReference type="RefSeq" id="YP_403414.1">
    <property type="nucleotide sequence ID" value="NC_007606.1"/>
</dbReference>
<dbReference type="SMR" id="Q32FI2"/>
<dbReference type="STRING" id="300267.SDY_1812"/>
<dbReference type="EnsemblBacteria" id="ABB61923">
    <property type="protein sequence ID" value="ABB61923"/>
    <property type="gene ID" value="SDY_1812"/>
</dbReference>
<dbReference type="GeneID" id="97601348"/>
<dbReference type="KEGG" id="sdy:SDY_1812"/>
<dbReference type="PATRIC" id="fig|300267.13.peg.2183"/>
<dbReference type="HOGENOM" id="CLU_169643_1_1_6"/>
<dbReference type="PRO" id="PR:Q32FI2"/>
<dbReference type="Proteomes" id="UP000002716">
    <property type="component" value="Chromosome"/>
</dbReference>
<dbReference type="GO" id="GO:0022625">
    <property type="term" value="C:cytosolic large ribosomal subunit"/>
    <property type="evidence" value="ECO:0007669"/>
    <property type="project" value="TreeGrafter"/>
</dbReference>
<dbReference type="GO" id="GO:0003735">
    <property type="term" value="F:structural constituent of ribosome"/>
    <property type="evidence" value="ECO:0007669"/>
    <property type="project" value="InterPro"/>
</dbReference>
<dbReference type="GO" id="GO:0006412">
    <property type="term" value="P:translation"/>
    <property type="evidence" value="ECO:0007669"/>
    <property type="project" value="UniProtKB-UniRule"/>
</dbReference>
<dbReference type="FunFam" id="4.10.410.60:FF:000001">
    <property type="entry name" value="50S ribosomal protein L35"/>
    <property type="match status" value="1"/>
</dbReference>
<dbReference type="Gene3D" id="4.10.410.60">
    <property type="match status" value="1"/>
</dbReference>
<dbReference type="HAMAP" id="MF_00514">
    <property type="entry name" value="Ribosomal_bL35"/>
    <property type="match status" value="1"/>
</dbReference>
<dbReference type="InterPro" id="IPR001706">
    <property type="entry name" value="Ribosomal_bL35"/>
</dbReference>
<dbReference type="InterPro" id="IPR021137">
    <property type="entry name" value="Ribosomal_bL35-like"/>
</dbReference>
<dbReference type="InterPro" id="IPR018265">
    <property type="entry name" value="Ribosomal_bL35_CS"/>
</dbReference>
<dbReference type="InterPro" id="IPR037229">
    <property type="entry name" value="Ribosomal_bL35_sf"/>
</dbReference>
<dbReference type="NCBIfam" id="TIGR00001">
    <property type="entry name" value="rpmI_bact"/>
    <property type="match status" value="1"/>
</dbReference>
<dbReference type="PANTHER" id="PTHR33343">
    <property type="entry name" value="54S RIBOSOMAL PROTEIN BL35M"/>
    <property type="match status" value="1"/>
</dbReference>
<dbReference type="PANTHER" id="PTHR33343:SF1">
    <property type="entry name" value="LARGE RIBOSOMAL SUBUNIT PROTEIN BL35M"/>
    <property type="match status" value="1"/>
</dbReference>
<dbReference type="Pfam" id="PF01632">
    <property type="entry name" value="Ribosomal_L35p"/>
    <property type="match status" value="1"/>
</dbReference>
<dbReference type="PRINTS" id="PR00064">
    <property type="entry name" value="RIBOSOMALL35"/>
</dbReference>
<dbReference type="SUPFAM" id="SSF143034">
    <property type="entry name" value="L35p-like"/>
    <property type="match status" value="1"/>
</dbReference>
<dbReference type="PROSITE" id="PS00936">
    <property type="entry name" value="RIBOSOMAL_L35"/>
    <property type="match status" value="1"/>
</dbReference>
<proteinExistence type="inferred from homology"/>
<evidence type="ECO:0000255" key="1">
    <source>
        <dbReference type="HAMAP-Rule" id="MF_00514"/>
    </source>
</evidence>
<evidence type="ECO:0000256" key="2">
    <source>
        <dbReference type="SAM" id="MobiDB-lite"/>
    </source>
</evidence>
<evidence type="ECO:0000305" key="3"/>
<comment type="similarity">
    <text evidence="1">Belongs to the bacterial ribosomal protein bL35 family.</text>
</comment>
<keyword id="KW-1185">Reference proteome</keyword>
<keyword id="KW-0687">Ribonucleoprotein</keyword>
<keyword id="KW-0689">Ribosomal protein</keyword>
<gene>
    <name evidence="1" type="primary">rpmI</name>
    <name type="ordered locus">SDY_1812</name>
</gene>
<name>RL35_SHIDS</name>
<accession>Q32FI2</accession>
<feature type="chain" id="PRO_0000258752" description="Large ribosomal subunit protein bL35">
    <location>
        <begin position="1"/>
        <end position="65"/>
    </location>
</feature>
<feature type="region of interest" description="Disordered" evidence="2">
    <location>
        <begin position="1"/>
        <end position="22"/>
    </location>
</feature>
<feature type="compositionally biased region" description="Basic residues" evidence="2">
    <location>
        <begin position="10"/>
        <end position="22"/>
    </location>
</feature>
<sequence>MPKIKTVRGAAKRFKKTGKGGFKHKHANLRHILTKKATKRKRHLRPKAMVSKGDLGLVIACLPYA</sequence>
<reference key="1">
    <citation type="journal article" date="2005" name="Nucleic Acids Res.">
        <title>Genome dynamics and diversity of Shigella species, the etiologic agents of bacillary dysentery.</title>
        <authorList>
            <person name="Yang F."/>
            <person name="Yang J."/>
            <person name="Zhang X."/>
            <person name="Chen L."/>
            <person name="Jiang Y."/>
            <person name="Yan Y."/>
            <person name="Tang X."/>
            <person name="Wang J."/>
            <person name="Xiong Z."/>
            <person name="Dong J."/>
            <person name="Xue Y."/>
            <person name="Zhu Y."/>
            <person name="Xu X."/>
            <person name="Sun L."/>
            <person name="Chen S."/>
            <person name="Nie H."/>
            <person name="Peng J."/>
            <person name="Xu J."/>
            <person name="Wang Y."/>
            <person name="Yuan Z."/>
            <person name="Wen Y."/>
            <person name="Yao Z."/>
            <person name="Shen Y."/>
            <person name="Qiang B."/>
            <person name="Hou Y."/>
            <person name="Yu J."/>
            <person name="Jin Q."/>
        </authorList>
    </citation>
    <scope>NUCLEOTIDE SEQUENCE [LARGE SCALE GENOMIC DNA]</scope>
    <source>
        <strain>Sd197</strain>
    </source>
</reference>
<organism>
    <name type="scientific">Shigella dysenteriae serotype 1 (strain Sd197)</name>
    <dbReference type="NCBI Taxonomy" id="300267"/>
    <lineage>
        <taxon>Bacteria</taxon>
        <taxon>Pseudomonadati</taxon>
        <taxon>Pseudomonadota</taxon>
        <taxon>Gammaproteobacteria</taxon>
        <taxon>Enterobacterales</taxon>
        <taxon>Enterobacteriaceae</taxon>
        <taxon>Shigella</taxon>
    </lineage>
</organism>